<proteinExistence type="inferred from homology"/>
<reference key="1">
    <citation type="journal article" date="2007" name="Science">
        <title>Legumes symbioses: absence of nod genes in photosynthetic bradyrhizobia.</title>
        <authorList>
            <person name="Giraud E."/>
            <person name="Moulin L."/>
            <person name="Vallenet D."/>
            <person name="Barbe V."/>
            <person name="Cytryn E."/>
            <person name="Avarre J.-C."/>
            <person name="Jaubert M."/>
            <person name="Simon D."/>
            <person name="Cartieaux F."/>
            <person name="Prin Y."/>
            <person name="Bena G."/>
            <person name="Hannibal L."/>
            <person name="Fardoux J."/>
            <person name="Kojadinovic M."/>
            <person name="Vuillet L."/>
            <person name="Lajus A."/>
            <person name="Cruveiller S."/>
            <person name="Rouy Z."/>
            <person name="Mangenot S."/>
            <person name="Segurens B."/>
            <person name="Dossat C."/>
            <person name="Franck W.L."/>
            <person name="Chang W.-S."/>
            <person name="Saunders E."/>
            <person name="Bruce D."/>
            <person name="Richardson P."/>
            <person name="Normand P."/>
            <person name="Dreyfus B."/>
            <person name="Pignol D."/>
            <person name="Stacey G."/>
            <person name="Emerich D."/>
            <person name="Vermeglio A."/>
            <person name="Medigue C."/>
            <person name="Sadowsky M."/>
        </authorList>
    </citation>
    <scope>NUCLEOTIDE SEQUENCE [LARGE SCALE GENOMIC DNA]</scope>
    <source>
        <strain>BTAi1 / ATCC BAA-1182</strain>
    </source>
</reference>
<feature type="chain" id="PRO_1000026466" description="Malate dehydrogenase">
    <location>
        <begin position="1"/>
        <end position="322"/>
    </location>
</feature>
<feature type="active site" description="Proton acceptor" evidence="1">
    <location>
        <position position="176"/>
    </location>
</feature>
<feature type="binding site" evidence="1">
    <location>
        <begin position="10"/>
        <end position="15"/>
    </location>
    <ligand>
        <name>NAD(+)</name>
        <dbReference type="ChEBI" id="CHEBI:57540"/>
    </ligand>
</feature>
<feature type="binding site" evidence="1">
    <location>
        <position position="34"/>
    </location>
    <ligand>
        <name>NAD(+)</name>
        <dbReference type="ChEBI" id="CHEBI:57540"/>
    </ligand>
</feature>
<feature type="binding site" evidence="1">
    <location>
        <position position="83"/>
    </location>
    <ligand>
        <name>substrate</name>
    </ligand>
</feature>
<feature type="binding site" evidence="1">
    <location>
        <position position="89"/>
    </location>
    <ligand>
        <name>substrate</name>
    </ligand>
</feature>
<feature type="binding site" evidence="1">
    <location>
        <position position="96"/>
    </location>
    <ligand>
        <name>NAD(+)</name>
        <dbReference type="ChEBI" id="CHEBI:57540"/>
    </ligand>
</feature>
<feature type="binding site" evidence="1">
    <location>
        <begin position="119"/>
        <end position="121"/>
    </location>
    <ligand>
        <name>NAD(+)</name>
        <dbReference type="ChEBI" id="CHEBI:57540"/>
    </ligand>
</feature>
<feature type="binding site" evidence="1">
    <location>
        <position position="121"/>
    </location>
    <ligand>
        <name>substrate</name>
    </ligand>
</feature>
<feature type="binding site" evidence="1">
    <location>
        <position position="152"/>
    </location>
    <ligand>
        <name>substrate</name>
    </ligand>
</feature>
<gene>
    <name evidence="1" type="primary">mdh</name>
    <name type="ordered locus">BBta_0392</name>
</gene>
<evidence type="ECO:0000255" key="1">
    <source>
        <dbReference type="HAMAP-Rule" id="MF_00487"/>
    </source>
</evidence>
<sequence>MARDKIALIGSGQIGGTLAHLIGLKELGDVVMFDIAEGVPQGKALDIAQSSPVDGFDAHYSGANSYEALDNAKVCIVTAGVPRKPGMSRDDLLSINLKVMEQVGAGIKKYAPDAFVICITNPLDAMVWALQKASGLPAKKVVGMAGVLDSARFRYFLADEFNVSVEDVTAFVLGGHGDTMVPLTKYSTVAGIPLPDLVKMGWTSQARIDEIVDRTRNGGAEIVNLLKTGSAYYAPAASAIAMAESYLRDKKRVLPCAAHLNGEFGVKDMYVGVPVVIGSKGVERIVEIELAGKDREAFDKSVAAVQGLVDACKKIAPDLLGR</sequence>
<keyword id="KW-0520">NAD</keyword>
<keyword id="KW-0560">Oxidoreductase</keyword>
<keyword id="KW-1185">Reference proteome</keyword>
<keyword id="KW-0816">Tricarboxylic acid cycle</keyword>
<organism>
    <name type="scientific">Bradyrhizobium sp. (strain BTAi1 / ATCC BAA-1182)</name>
    <dbReference type="NCBI Taxonomy" id="288000"/>
    <lineage>
        <taxon>Bacteria</taxon>
        <taxon>Pseudomonadati</taxon>
        <taxon>Pseudomonadota</taxon>
        <taxon>Alphaproteobacteria</taxon>
        <taxon>Hyphomicrobiales</taxon>
        <taxon>Nitrobacteraceae</taxon>
        <taxon>Bradyrhizobium</taxon>
    </lineage>
</organism>
<dbReference type="EC" id="1.1.1.37" evidence="1"/>
<dbReference type="EMBL" id="CP000494">
    <property type="protein sequence ID" value="ABQ32679.1"/>
    <property type="molecule type" value="Genomic_DNA"/>
</dbReference>
<dbReference type="RefSeq" id="WP_012040732.1">
    <property type="nucleotide sequence ID" value="NC_009485.1"/>
</dbReference>
<dbReference type="SMR" id="A5E935"/>
<dbReference type="STRING" id="288000.BBta_0392"/>
<dbReference type="KEGG" id="bbt:BBta_0392"/>
<dbReference type="eggNOG" id="COG0039">
    <property type="taxonomic scope" value="Bacteria"/>
</dbReference>
<dbReference type="HOGENOM" id="CLU_045401_2_1_5"/>
<dbReference type="OrthoDB" id="9802969at2"/>
<dbReference type="Proteomes" id="UP000000246">
    <property type="component" value="Chromosome"/>
</dbReference>
<dbReference type="GO" id="GO:0004459">
    <property type="term" value="F:L-lactate dehydrogenase activity"/>
    <property type="evidence" value="ECO:0007669"/>
    <property type="project" value="TreeGrafter"/>
</dbReference>
<dbReference type="GO" id="GO:0030060">
    <property type="term" value="F:L-malate dehydrogenase (NAD+) activity"/>
    <property type="evidence" value="ECO:0007669"/>
    <property type="project" value="UniProtKB-UniRule"/>
</dbReference>
<dbReference type="GO" id="GO:0006089">
    <property type="term" value="P:lactate metabolic process"/>
    <property type="evidence" value="ECO:0007669"/>
    <property type="project" value="TreeGrafter"/>
</dbReference>
<dbReference type="GO" id="GO:0006099">
    <property type="term" value="P:tricarboxylic acid cycle"/>
    <property type="evidence" value="ECO:0007669"/>
    <property type="project" value="UniProtKB-UniRule"/>
</dbReference>
<dbReference type="CDD" id="cd01339">
    <property type="entry name" value="LDH-like_MDH"/>
    <property type="match status" value="1"/>
</dbReference>
<dbReference type="FunFam" id="3.40.50.720:FF:000018">
    <property type="entry name" value="Malate dehydrogenase"/>
    <property type="match status" value="1"/>
</dbReference>
<dbReference type="FunFam" id="3.90.110.10:FF:000004">
    <property type="entry name" value="Malate dehydrogenase"/>
    <property type="match status" value="1"/>
</dbReference>
<dbReference type="Gene3D" id="3.90.110.10">
    <property type="entry name" value="Lactate dehydrogenase/glycoside hydrolase, family 4, C-terminal"/>
    <property type="match status" value="1"/>
</dbReference>
<dbReference type="Gene3D" id="3.40.50.720">
    <property type="entry name" value="NAD(P)-binding Rossmann-like Domain"/>
    <property type="match status" value="1"/>
</dbReference>
<dbReference type="HAMAP" id="MF_00487">
    <property type="entry name" value="Malate_dehydrog_3"/>
    <property type="match status" value="1"/>
</dbReference>
<dbReference type="InterPro" id="IPR001557">
    <property type="entry name" value="L-lactate/malate_DH"/>
</dbReference>
<dbReference type="InterPro" id="IPR022383">
    <property type="entry name" value="Lactate/malate_DH_C"/>
</dbReference>
<dbReference type="InterPro" id="IPR001236">
    <property type="entry name" value="Lactate/malate_DH_N"/>
</dbReference>
<dbReference type="InterPro" id="IPR015955">
    <property type="entry name" value="Lactate_DH/Glyco_Ohase_4_C"/>
</dbReference>
<dbReference type="InterPro" id="IPR011275">
    <property type="entry name" value="Malate_DH_type3"/>
</dbReference>
<dbReference type="InterPro" id="IPR036291">
    <property type="entry name" value="NAD(P)-bd_dom_sf"/>
</dbReference>
<dbReference type="NCBIfam" id="TIGR01763">
    <property type="entry name" value="MalateDH_bact"/>
    <property type="match status" value="1"/>
</dbReference>
<dbReference type="NCBIfam" id="NF004863">
    <property type="entry name" value="PRK06223.1"/>
    <property type="match status" value="1"/>
</dbReference>
<dbReference type="PANTHER" id="PTHR43128">
    <property type="entry name" value="L-2-HYDROXYCARBOXYLATE DEHYDROGENASE (NAD(P)(+))"/>
    <property type="match status" value="1"/>
</dbReference>
<dbReference type="PANTHER" id="PTHR43128:SF16">
    <property type="entry name" value="L-LACTATE DEHYDROGENASE"/>
    <property type="match status" value="1"/>
</dbReference>
<dbReference type="Pfam" id="PF02866">
    <property type="entry name" value="Ldh_1_C"/>
    <property type="match status" value="1"/>
</dbReference>
<dbReference type="Pfam" id="PF00056">
    <property type="entry name" value="Ldh_1_N"/>
    <property type="match status" value="1"/>
</dbReference>
<dbReference type="PIRSF" id="PIRSF000102">
    <property type="entry name" value="Lac_mal_DH"/>
    <property type="match status" value="1"/>
</dbReference>
<dbReference type="PRINTS" id="PR00086">
    <property type="entry name" value="LLDHDRGNASE"/>
</dbReference>
<dbReference type="SUPFAM" id="SSF56327">
    <property type="entry name" value="LDH C-terminal domain-like"/>
    <property type="match status" value="1"/>
</dbReference>
<dbReference type="SUPFAM" id="SSF51735">
    <property type="entry name" value="NAD(P)-binding Rossmann-fold domains"/>
    <property type="match status" value="1"/>
</dbReference>
<protein>
    <recommendedName>
        <fullName evidence="1">Malate dehydrogenase</fullName>
        <ecNumber evidence="1">1.1.1.37</ecNumber>
    </recommendedName>
</protein>
<name>MDH_BRASB</name>
<comment type="function">
    <text evidence="1">Catalyzes the reversible oxidation of malate to oxaloacetate.</text>
</comment>
<comment type="catalytic activity">
    <reaction evidence="1">
        <text>(S)-malate + NAD(+) = oxaloacetate + NADH + H(+)</text>
        <dbReference type="Rhea" id="RHEA:21432"/>
        <dbReference type="ChEBI" id="CHEBI:15378"/>
        <dbReference type="ChEBI" id="CHEBI:15589"/>
        <dbReference type="ChEBI" id="CHEBI:16452"/>
        <dbReference type="ChEBI" id="CHEBI:57540"/>
        <dbReference type="ChEBI" id="CHEBI:57945"/>
        <dbReference type="EC" id="1.1.1.37"/>
    </reaction>
</comment>
<comment type="similarity">
    <text evidence="1">Belongs to the LDH/MDH superfamily. MDH type 3 family.</text>
</comment>
<accession>A5E935</accession>